<sequence length="266" mass="30278">MYFPPSSVPKRLVLVHISAVVAIKLLLIRSVSSLNMTNAYLQHKCIVSEGKYQPGSVYEKNLNIIIRASSAGDFRSGFDLVFRGKGSNFVTLMYQCRGDSYWSRCRSCYTTALSALRKRCSRNKGGIIWYDQCLMEISSIRNEGKLDYNNNFCMSNTKNASGSPLEFKQKMVDFLLNLGLKATSEDNMDKYNQAVMYAMGEERVGTKKLYAMVQCTKDLWLKTCYACLEWIILKESDCCDGKLGGRVFSTSCNYRYELYPFIKPTV</sequence>
<reference key="1">
    <citation type="journal article" date="2000" name="DNA Res.">
        <title>Structural analysis of Arabidopsis thaliana chromosome 3. I. Sequence features of the regions of 4,504,864 bp covered by sixty P1 and TAC clones.</title>
        <authorList>
            <person name="Sato S."/>
            <person name="Nakamura Y."/>
            <person name="Kaneko T."/>
            <person name="Katoh T."/>
            <person name="Asamizu E."/>
            <person name="Tabata S."/>
        </authorList>
    </citation>
    <scope>NUCLEOTIDE SEQUENCE [LARGE SCALE GENOMIC DNA]</scope>
    <source>
        <strain>cv. Columbia</strain>
    </source>
</reference>
<reference key="2">
    <citation type="journal article" date="2017" name="Plant J.">
        <title>Araport11: a complete reannotation of the Arabidopsis thaliana reference genome.</title>
        <authorList>
            <person name="Cheng C.Y."/>
            <person name="Krishnakumar V."/>
            <person name="Chan A.P."/>
            <person name="Thibaud-Nissen F."/>
            <person name="Schobel S."/>
            <person name="Town C.D."/>
        </authorList>
    </citation>
    <scope>GENOME REANNOTATION</scope>
    <source>
        <strain>cv. Columbia</strain>
    </source>
</reference>
<reference key="3">
    <citation type="journal article" date="2001" name="Plant Physiol.">
        <title>A superfamily of proteins with novel cysteine-rich repeats.</title>
        <authorList>
            <person name="Chen Z."/>
        </authorList>
    </citation>
    <scope>GENE FAMILY ORGANIZATION</scope>
    <scope>NOMENCLATURE</scope>
</reference>
<accession>Q9LRL9</accession>
<comment type="subcellular location">
    <subcellularLocation>
        <location evidence="3">Secreted</location>
    </subcellularLocation>
</comment>
<comment type="similarity">
    <text evidence="3">Belongs to the cysteine-rich repeat secretory protein family.</text>
</comment>
<comment type="caution">
    <text evidence="3">Could be the product of a pseudogene.</text>
</comment>
<comment type="sequence caution" evidence="3">
    <conflict type="erroneous gene model prediction">
        <sequence resource="EMBL-CDS" id="BAB01371"/>
    </conflict>
</comment>
<comment type="sequence caution" evidence="3">
    <conflict type="erroneous termination">
        <sequence resource="EMBL-CDS" id="BAB01371"/>
    </conflict>
    <text>Truncated C-terminus.</text>
</comment>
<name>CRR20_ARATH</name>
<keyword id="KW-1185">Reference proteome</keyword>
<keyword id="KW-0677">Repeat</keyword>
<keyword id="KW-0964">Secreted</keyword>
<keyword id="KW-0732">Signal</keyword>
<dbReference type="EMBL" id="AB028622">
    <property type="protein sequence ID" value="BAB01371.1"/>
    <property type="status" value="ALT_SEQ"/>
    <property type="molecule type" value="Genomic_DNA"/>
</dbReference>
<dbReference type="EMBL" id="CP002686">
    <property type="status" value="NOT_ANNOTATED_CDS"/>
    <property type="molecule type" value="Genomic_DNA"/>
</dbReference>
<dbReference type="SMR" id="Q9LRL9"/>
<dbReference type="Araport" id="AT3G21933"/>
<dbReference type="TAIR" id="AT3G21933"/>
<dbReference type="InParanoid" id="Q9LRL9"/>
<dbReference type="Proteomes" id="UP000006548">
    <property type="component" value="Chromosome 3"/>
</dbReference>
<dbReference type="ExpressionAtlas" id="Q9LRL9">
    <property type="expression patterns" value="baseline"/>
</dbReference>
<dbReference type="GO" id="GO:0005576">
    <property type="term" value="C:extracellular region"/>
    <property type="evidence" value="ECO:0007669"/>
    <property type="project" value="UniProtKB-SubCell"/>
</dbReference>
<dbReference type="CDD" id="cd23509">
    <property type="entry name" value="Gnk2-like"/>
    <property type="match status" value="2"/>
</dbReference>
<dbReference type="Gene3D" id="3.30.430.20">
    <property type="entry name" value="Gnk2 domain, C-X8-C-X2-C motif"/>
    <property type="match status" value="2"/>
</dbReference>
<dbReference type="InterPro" id="IPR050581">
    <property type="entry name" value="CRR_secretory_protein"/>
</dbReference>
<dbReference type="InterPro" id="IPR002902">
    <property type="entry name" value="GNK2"/>
</dbReference>
<dbReference type="InterPro" id="IPR038408">
    <property type="entry name" value="GNK2_sf"/>
</dbReference>
<dbReference type="PANTHER" id="PTHR32411:SF54">
    <property type="entry name" value="CYSTEINE-RICH REPEAT SECRETORY PROTEIN 29-RELATED"/>
    <property type="match status" value="1"/>
</dbReference>
<dbReference type="PANTHER" id="PTHR32411">
    <property type="entry name" value="CYSTEINE-RICH REPEAT SECRETORY PROTEIN 38-RELATED"/>
    <property type="match status" value="1"/>
</dbReference>
<dbReference type="Pfam" id="PF01657">
    <property type="entry name" value="Stress-antifung"/>
    <property type="match status" value="2"/>
</dbReference>
<dbReference type="PROSITE" id="PS51473">
    <property type="entry name" value="GNK2"/>
    <property type="match status" value="2"/>
</dbReference>
<proteinExistence type="uncertain"/>
<feature type="signal peptide" evidence="1">
    <location>
        <begin position="1"/>
        <end position="33"/>
    </location>
</feature>
<feature type="chain" id="PRO_0000296148" description="Putative cysteine-rich repeat secretory protein 20">
    <location>
        <begin position="34"/>
        <end position="266"/>
    </location>
</feature>
<feature type="domain" description="Gnk2-homologous 1" evidence="2">
    <location>
        <begin position="40"/>
        <end position="142"/>
    </location>
</feature>
<feature type="domain" description="Gnk2-homologous 2" evidence="2">
    <location>
        <begin position="148"/>
        <end position="261"/>
    </location>
</feature>
<organism>
    <name type="scientific">Arabidopsis thaliana</name>
    <name type="common">Mouse-ear cress</name>
    <dbReference type="NCBI Taxonomy" id="3702"/>
    <lineage>
        <taxon>Eukaryota</taxon>
        <taxon>Viridiplantae</taxon>
        <taxon>Streptophyta</taxon>
        <taxon>Embryophyta</taxon>
        <taxon>Tracheophyta</taxon>
        <taxon>Spermatophyta</taxon>
        <taxon>Magnoliopsida</taxon>
        <taxon>eudicotyledons</taxon>
        <taxon>Gunneridae</taxon>
        <taxon>Pentapetalae</taxon>
        <taxon>rosids</taxon>
        <taxon>malvids</taxon>
        <taxon>Brassicales</taxon>
        <taxon>Brassicaceae</taxon>
        <taxon>Camelineae</taxon>
        <taxon>Arabidopsis</taxon>
    </lineage>
</organism>
<evidence type="ECO:0000255" key="1"/>
<evidence type="ECO:0000255" key="2">
    <source>
        <dbReference type="PROSITE-ProRule" id="PRU00806"/>
    </source>
</evidence>
<evidence type="ECO:0000305" key="3"/>
<gene>
    <name type="primary">CRRSP20</name>
    <name type="ordered locus">At3g21933</name>
    <name type="ORF">MZN24.6</name>
</gene>
<protein>
    <recommendedName>
        <fullName>Putative cysteine-rich repeat secretory protein 20</fullName>
    </recommendedName>
</protein>